<gene>
    <name type="primary">WSB2</name>
</gene>
<evidence type="ECO:0000250" key="1"/>
<evidence type="ECO:0000255" key="2">
    <source>
        <dbReference type="PROSITE-ProRule" id="PRU00194"/>
    </source>
</evidence>
<evidence type="ECO:0000256" key="3">
    <source>
        <dbReference type="SAM" id="MobiDB-lite"/>
    </source>
</evidence>
<accession>Q0V8J1</accession>
<feature type="chain" id="PRO_0000253036" description="WD repeat and SOCS box-containing protein 2">
    <location>
        <begin position="1"/>
        <end position="406"/>
    </location>
</feature>
<feature type="repeat" description="WD 1">
    <location>
        <begin position="107"/>
        <end position="150"/>
    </location>
</feature>
<feature type="repeat" description="WD 2">
    <location>
        <begin position="153"/>
        <end position="193"/>
    </location>
</feature>
<feature type="repeat" description="WD 3">
    <location>
        <begin position="197"/>
        <end position="236"/>
    </location>
</feature>
<feature type="repeat" description="WD 4">
    <location>
        <begin position="239"/>
        <end position="278"/>
    </location>
</feature>
<feature type="repeat" description="WD 5">
    <location>
        <begin position="293"/>
        <end position="332"/>
    </location>
</feature>
<feature type="domain" description="SOCS box" evidence="2">
    <location>
        <begin position="358"/>
        <end position="406"/>
    </location>
</feature>
<feature type="region of interest" description="Disordered" evidence="3">
    <location>
        <begin position="70"/>
        <end position="89"/>
    </location>
</feature>
<keyword id="KW-1185">Reference proteome</keyword>
<keyword id="KW-0677">Repeat</keyword>
<keyword id="KW-0833">Ubl conjugation pathway</keyword>
<keyword id="KW-0853">WD repeat</keyword>
<reference key="1">
    <citation type="journal article" date="2005" name="BMC Genomics">
        <title>Characterization of 954 bovine full-CDS cDNA sequences.</title>
        <authorList>
            <person name="Harhay G.P."/>
            <person name="Sonstegard T.S."/>
            <person name="Keele J.W."/>
            <person name="Heaton M.P."/>
            <person name="Clawson M.L."/>
            <person name="Snelling W.M."/>
            <person name="Wiedmann R.T."/>
            <person name="Van Tassell C.P."/>
            <person name="Smith T.P.L."/>
        </authorList>
    </citation>
    <scope>NUCLEOTIDE SEQUENCE [LARGE SCALE MRNA]</scope>
</reference>
<comment type="function">
    <text evidence="1">May be a substrate-recognition component of a SCF-like ECS (Elongin-Cullin-SOCS-box protein) E3 ubiquitin ligase complex which mediates the ubiquitination and subsequent proteasomal degradation of target proteins.</text>
</comment>
<comment type="pathway">
    <text>Protein modification; protein ubiquitination.</text>
</comment>
<comment type="domain">
    <text evidence="1">The SOCS box domain mediates the interaction with the Elongin BC complex, an adapter module in different E3 ubiquitin ligase complexes.</text>
</comment>
<proteinExistence type="evidence at transcript level"/>
<name>WSB2_BOVIN</name>
<dbReference type="EMBL" id="BT026227">
    <property type="protein sequence ID" value="ABG67066.1"/>
    <property type="molecule type" value="mRNA"/>
</dbReference>
<dbReference type="RefSeq" id="NP_001068825.1">
    <property type="nucleotide sequence ID" value="NM_001075357.1"/>
</dbReference>
<dbReference type="SMR" id="Q0V8J1"/>
<dbReference type="FunCoup" id="Q0V8J1">
    <property type="interactions" value="694"/>
</dbReference>
<dbReference type="PaxDb" id="9913-ENSBTAP00000009395"/>
<dbReference type="GeneID" id="508388"/>
<dbReference type="KEGG" id="bta:508388"/>
<dbReference type="CTD" id="55884"/>
<dbReference type="eggNOG" id="KOG0266">
    <property type="taxonomic scope" value="Eukaryota"/>
</dbReference>
<dbReference type="HOGENOM" id="CLU_056876_0_0_1"/>
<dbReference type="InParanoid" id="Q0V8J1"/>
<dbReference type="OrthoDB" id="538223at2759"/>
<dbReference type="TreeFam" id="TF329216"/>
<dbReference type="UniPathway" id="UPA00143"/>
<dbReference type="Proteomes" id="UP000009136">
    <property type="component" value="Unplaced"/>
</dbReference>
<dbReference type="GO" id="GO:0035556">
    <property type="term" value="P:intracellular signal transduction"/>
    <property type="evidence" value="ECO:0007669"/>
    <property type="project" value="InterPro"/>
</dbReference>
<dbReference type="GO" id="GO:0000209">
    <property type="term" value="P:protein polyubiquitination"/>
    <property type="evidence" value="ECO:0000318"/>
    <property type="project" value="GO_Central"/>
</dbReference>
<dbReference type="CDD" id="cd03733">
    <property type="entry name" value="SOCS_WSB_SWIP"/>
    <property type="match status" value="1"/>
</dbReference>
<dbReference type="CDD" id="cd00200">
    <property type="entry name" value="WD40"/>
    <property type="match status" value="1"/>
</dbReference>
<dbReference type="FunFam" id="2.130.10.10:FF:000256">
    <property type="entry name" value="WD repeat and SOCS box containing 2"/>
    <property type="match status" value="1"/>
</dbReference>
<dbReference type="FunFam" id="2.130.10.10:FF:000264">
    <property type="entry name" value="WD repeat and SOCS box containing 2"/>
    <property type="match status" value="1"/>
</dbReference>
<dbReference type="Gene3D" id="1.10.750.20">
    <property type="entry name" value="SOCS box"/>
    <property type="match status" value="1"/>
</dbReference>
<dbReference type="Gene3D" id="2.130.10.10">
    <property type="entry name" value="YVTN repeat-like/Quinoprotein amine dehydrogenase"/>
    <property type="match status" value="2"/>
</dbReference>
<dbReference type="InterPro" id="IPR020472">
    <property type="entry name" value="G-protein_beta_WD-40_rep"/>
</dbReference>
<dbReference type="InterPro" id="IPR001496">
    <property type="entry name" value="SOCS_box"/>
</dbReference>
<dbReference type="InterPro" id="IPR036036">
    <property type="entry name" value="SOCS_box-like_dom_sf"/>
</dbReference>
<dbReference type="InterPro" id="IPR015943">
    <property type="entry name" value="WD40/YVTN_repeat-like_dom_sf"/>
</dbReference>
<dbReference type="InterPro" id="IPR019775">
    <property type="entry name" value="WD40_repeat_CS"/>
</dbReference>
<dbReference type="InterPro" id="IPR036322">
    <property type="entry name" value="WD40_repeat_dom_sf"/>
</dbReference>
<dbReference type="InterPro" id="IPR001680">
    <property type="entry name" value="WD40_rpt"/>
</dbReference>
<dbReference type="InterPro" id="IPR051983">
    <property type="entry name" value="WSB_SOCS-box_domain"/>
</dbReference>
<dbReference type="PANTHER" id="PTHR15622:SF1">
    <property type="entry name" value="WD REPEAT AND SOCS BOX-CONTAINING PROTEIN 2"/>
    <property type="match status" value="1"/>
</dbReference>
<dbReference type="PANTHER" id="PTHR15622">
    <property type="entry name" value="WD40 REPEAT PROTEIN"/>
    <property type="match status" value="1"/>
</dbReference>
<dbReference type="Pfam" id="PF07525">
    <property type="entry name" value="SOCS_box"/>
    <property type="match status" value="1"/>
</dbReference>
<dbReference type="Pfam" id="PF00400">
    <property type="entry name" value="WD40"/>
    <property type="match status" value="5"/>
</dbReference>
<dbReference type="PRINTS" id="PR00320">
    <property type="entry name" value="GPROTEINBRPT"/>
</dbReference>
<dbReference type="SMART" id="SM00253">
    <property type="entry name" value="SOCS"/>
    <property type="match status" value="1"/>
</dbReference>
<dbReference type="SMART" id="SM00969">
    <property type="entry name" value="SOCS_box"/>
    <property type="match status" value="1"/>
</dbReference>
<dbReference type="SMART" id="SM00320">
    <property type="entry name" value="WD40"/>
    <property type="match status" value="6"/>
</dbReference>
<dbReference type="SUPFAM" id="SSF158235">
    <property type="entry name" value="SOCS box-like"/>
    <property type="match status" value="1"/>
</dbReference>
<dbReference type="SUPFAM" id="SSF50978">
    <property type="entry name" value="WD40 repeat-like"/>
    <property type="match status" value="1"/>
</dbReference>
<dbReference type="PROSITE" id="PS50225">
    <property type="entry name" value="SOCS"/>
    <property type="match status" value="1"/>
</dbReference>
<dbReference type="PROSITE" id="PS00678">
    <property type="entry name" value="WD_REPEATS_1"/>
    <property type="match status" value="2"/>
</dbReference>
<dbReference type="PROSITE" id="PS50082">
    <property type="entry name" value="WD_REPEATS_2"/>
    <property type="match status" value="5"/>
</dbReference>
<dbReference type="PROSITE" id="PS50294">
    <property type="entry name" value="WD_REPEATS_REGION"/>
    <property type="match status" value="1"/>
</dbReference>
<sequence length="406" mass="45520">MLSPAPEEPLLLAELKPGRPHQFDWKSSCETWSVAFSPDGSWFAWSQGHCIVKLIPWPLEEQFIPKGFEAKSRSSKNETKGRGSPKEKTLDCGQIVWGLAFSPWPSPPSKKLWARHHPQVPDVSCLILATGLNDGQIKIWEVQTGLLLLNLSGHQDVVRDLSFTPSGSLILVSASRDKTLRIWDLNKHGKQIQVLSGHLQWVYCCSISPDCSMLCSAAGEKSVFLWSMRSYTLIRKLEGHQSSVVSCDFSPDSALLVTASYDTNVIMWDPYTGERLRSLHHTQLNPPMDDSDVHISSLRSVCFSPEGLYLATVADDRLLRIWALELKTPIAFAPMTNGLCCTFFPHGGVIATGTRDGHVQFWTAPRVLSSLKHLCRKALRSFLTTYQVLALPIPKKMKEFLTYRTF</sequence>
<protein>
    <recommendedName>
        <fullName>WD repeat and SOCS box-containing protein 2</fullName>
        <shortName>WSB-2</shortName>
    </recommendedName>
</protein>
<organism>
    <name type="scientific">Bos taurus</name>
    <name type="common">Bovine</name>
    <dbReference type="NCBI Taxonomy" id="9913"/>
    <lineage>
        <taxon>Eukaryota</taxon>
        <taxon>Metazoa</taxon>
        <taxon>Chordata</taxon>
        <taxon>Craniata</taxon>
        <taxon>Vertebrata</taxon>
        <taxon>Euteleostomi</taxon>
        <taxon>Mammalia</taxon>
        <taxon>Eutheria</taxon>
        <taxon>Laurasiatheria</taxon>
        <taxon>Artiodactyla</taxon>
        <taxon>Ruminantia</taxon>
        <taxon>Pecora</taxon>
        <taxon>Bovidae</taxon>
        <taxon>Bovinae</taxon>
        <taxon>Bos</taxon>
    </lineage>
</organism>